<accession>Q9BYV9</accession>
<accession>E1P518</accession>
<accession>Q59H70</accession>
<accession>Q5T793</accession>
<accession>Q9NTS5</accession>
<protein>
    <recommendedName>
        <fullName>Transcription regulator protein BACH2</fullName>
    </recommendedName>
    <alternativeName>
        <fullName>BTB and CNC homolog 2</fullName>
    </alternativeName>
</protein>
<proteinExistence type="evidence at protein level"/>
<organism>
    <name type="scientific">Homo sapiens</name>
    <name type="common">Human</name>
    <dbReference type="NCBI Taxonomy" id="9606"/>
    <lineage>
        <taxon>Eukaryota</taxon>
        <taxon>Metazoa</taxon>
        <taxon>Chordata</taxon>
        <taxon>Craniata</taxon>
        <taxon>Vertebrata</taxon>
        <taxon>Euteleostomi</taxon>
        <taxon>Mammalia</taxon>
        <taxon>Eutheria</taxon>
        <taxon>Euarchontoglires</taxon>
        <taxon>Primates</taxon>
        <taxon>Haplorrhini</taxon>
        <taxon>Catarrhini</taxon>
        <taxon>Hominidae</taxon>
        <taxon>Homo</taxon>
    </lineage>
</organism>
<feature type="chain" id="PRO_0000076456" description="Transcription regulator protein BACH2">
    <location>
        <begin position="1"/>
        <end position="841"/>
    </location>
</feature>
<feature type="domain" description="BTB" evidence="3">
    <location>
        <begin position="37"/>
        <end position="103"/>
    </location>
</feature>
<feature type="domain" description="bZIP" evidence="4">
    <location>
        <begin position="646"/>
        <end position="709"/>
    </location>
</feature>
<feature type="region of interest" description="Disordered" evidence="5">
    <location>
        <begin position="153"/>
        <end position="173"/>
    </location>
</feature>
<feature type="region of interest" description="Disordered" evidence="5">
    <location>
        <begin position="204"/>
        <end position="226"/>
    </location>
</feature>
<feature type="region of interest" description="Disordered" evidence="5">
    <location>
        <begin position="246"/>
        <end position="329"/>
    </location>
</feature>
<feature type="region of interest" description="Disordered" evidence="5">
    <location>
        <begin position="583"/>
        <end position="610"/>
    </location>
</feature>
<feature type="region of interest" description="Basic motif" evidence="4">
    <location>
        <begin position="651"/>
        <end position="667"/>
    </location>
</feature>
<feature type="region of interest" description="Leucine-zipper" evidence="4">
    <location>
        <begin position="671"/>
        <end position="678"/>
    </location>
</feature>
<feature type="region of interest" description="Disordered" evidence="5">
    <location>
        <begin position="777"/>
        <end position="816"/>
    </location>
</feature>
<feature type="short sequence motif" description="Nuclear export signal" evidence="1">
    <location>
        <begin position="821"/>
        <end position="841"/>
    </location>
</feature>
<feature type="compositionally biased region" description="Acidic residues" evidence="5">
    <location>
        <begin position="160"/>
        <end position="172"/>
    </location>
</feature>
<feature type="compositionally biased region" description="Basic and acidic residues" evidence="5">
    <location>
        <begin position="214"/>
        <end position="224"/>
    </location>
</feature>
<feature type="compositionally biased region" description="Basic and acidic residues" evidence="5">
    <location>
        <begin position="298"/>
        <end position="313"/>
    </location>
</feature>
<feature type="compositionally biased region" description="Polar residues" evidence="5">
    <location>
        <begin position="584"/>
        <end position="598"/>
    </location>
</feature>
<feature type="modified residue" description="Phosphoserine" evidence="2">
    <location>
        <position position="315"/>
    </location>
</feature>
<feature type="modified residue" description="Phosphoserine; by RPS6KB1" evidence="6">
    <location>
        <position position="521"/>
    </location>
</feature>
<feature type="disulfide bond" description="Interchain; redox-active" evidence="7">
    <location>
        <position position="20"/>
    </location>
</feature>
<feature type="cross-link" description="Glycyl lysine isopeptide (Lys-Gly) (interchain with G-Cter in SUMO2)" evidence="10">
    <location>
        <position position="382"/>
    </location>
</feature>
<feature type="cross-link" description="Glycyl lysine isopeptide (Lys-Gly) (interchain with G-Cter in SUMO2)" evidence="10">
    <location>
        <position position="421"/>
    </location>
</feature>
<feature type="sequence variant" id="VAR_082216" description="In IMD60; impairs protein stability; the mutant is unsoluble and forms multiple aggregates." evidence="8">
    <original>L</original>
    <variation>P</variation>
    <location>
        <position position="24"/>
    </location>
</feature>
<feature type="sequence variant" id="VAR_033535" description="In dbSNP:rs34335140.">
    <original>A</original>
    <variation>T</variation>
    <location>
        <position position="418"/>
    </location>
</feature>
<feature type="sequence variant" id="VAR_082217" description="In IMD60; uncertain significance; severely decreased localization in the nucleus; the mutant aggregates in the cytoplasm; dbSNP:rs757652995." evidence="8">
    <original>E</original>
    <variation>K</variation>
    <location>
        <position position="788"/>
    </location>
</feature>
<feature type="mutagenesis site" description="Leads to nuclear accumulation." evidence="6">
    <original>S</original>
    <variation>A</variation>
    <location>
        <position position="521"/>
    </location>
</feature>
<feature type="sequence conflict" description="In Ref. 3; BAD92126." evidence="9" ref="3">
    <original>V</original>
    <variation>A</variation>
    <location>
        <position position="75"/>
    </location>
</feature>
<feature type="sequence conflict" description="In Ref. 1; AAK48898." evidence="9" ref="1">
    <original>L</original>
    <variation>F</variation>
    <location>
        <position position="291"/>
    </location>
</feature>
<feature type="strand" evidence="11">
    <location>
        <begin position="12"/>
        <end position="15"/>
    </location>
</feature>
<feature type="helix" evidence="11">
    <location>
        <begin position="19"/>
        <end position="33"/>
    </location>
</feature>
<feature type="strand" evidence="11">
    <location>
        <begin position="39"/>
        <end position="43"/>
    </location>
</feature>
<feature type="strand" evidence="11">
    <location>
        <begin position="46"/>
        <end position="50"/>
    </location>
</feature>
<feature type="helix" evidence="11">
    <location>
        <begin position="52"/>
        <end position="58"/>
    </location>
</feature>
<feature type="helix" evidence="11">
    <location>
        <begin position="60"/>
        <end position="66"/>
    </location>
</feature>
<feature type="strand" evidence="11">
    <location>
        <begin position="75"/>
        <end position="77"/>
    </location>
</feature>
<feature type="helix" evidence="11">
    <location>
        <begin position="84"/>
        <end position="94"/>
    </location>
</feature>
<feature type="strand" evidence="11">
    <location>
        <begin position="97"/>
        <end position="101"/>
    </location>
</feature>
<feature type="turn" evidence="11">
    <location>
        <begin position="103"/>
        <end position="105"/>
    </location>
</feature>
<feature type="helix" evidence="11">
    <location>
        <begin position="106"/>
        <end position="116"/>
    </location>
</feature>
<feature type="strand" evidence="11">
    <location>
        <begin position="118"/>
        <end position="120"/>
    </location>
</feature>
<evidence type="ECO:0000250" key="1"/>
<evidence type="ECO:0000250" key="2">
    <source>
        <dbReference type="UniProtKB" id="P97303"/>
    </source>
</evidence>
<evidence type="ECO:0000255" key="3">
    <source>
        <dbReference type="PROSITE-ProRule" id="PRU00037"/>
    </source>
</evidence>
<evidence type="ECO:0000255" key="4">
    <source>
        <dbReference type="PROSITE-ProRule" id="PRU00978"/>
    </source>
</evidence>
<evidence type="ECO:0000256" key="5">
    <source>
        <dbReference type="SAM" id="MobiDB-lite"/>
    </source>
</evidence>
<evidence type="ECO:0000269" key="6">
    <source>
    </source>
</evidence>
<evidence type="ECO:0000269" key="7">
    <source>
    </source>
</evidence>
<evidence type="ECO:0000269" key="8">
    <source>
    </source>
</evidence>
<evidence type="ECO:0000305" key="9"/>
<evidence type="ECO:0007744" key="10">
    <source>
    </source>
</evidence>
<evidence type="ECO:0007829" key="11">
    <source>
        <dbReference type="PDB" id="3OHU"/>
    </source>
</evidence>
<name>BACH2_HUMAN</name>
<reference key="1">
    <citation type="journal article" date="2000" name="Oncogene">
        <title>Cloning and expression of human B cell-specific transcription factor BACH2 mapped to chromosome 6q15.</title>
        <authorList>
            <person name="Sasaki S."/>
            <person name="Ito E."/>
            <person name="Toki T."/>
            <person name="Maekawa T."/>
            <person name="Kanezaki R."/>
            <person name="Umenai T."/>
            <person name="Muto A."/>
            <person name="Nagai H."/>
            <person name="Kinoshita T."/>
            <person name="Yamamoto M."/>
            <person name="Inazawa J."/>
            <person name="Taketo M.M."/>
            <person name="Nakahata T."/>
            <person name="Igarashi K."/>
            <person name="Yokoyama M."/>
        </authorList>
    </citation>
    <scope>NUCLEOTIDE SEQUENCE [MRNA]</scope>
</reference>
<reference key="2">
    <citation type="journal article" date="2001" name="Genes Chromosomes Cancer">
        <title>Transcription factor BACH2 is transcriptionally regulated by the BCR/ABL oncogene.</title>
        <authorList>
            <person name="Vieira S.A.D."/>
            <person name="Deininger M.W.N."/>
            <person name="Sorour A."/>
            <person name="Sinclair P."/>
            <person name="Foroni L."/>
            <person name="Goldman J.M."/>
            <person name="Melo J.V."/>
        </authorList>
    </citation>
    <scope>NUCLEOTIDE SEQUENCE [MRNA]</scope>
</reference>
<reference key="3">
    <citation type="submission" date="2005-03" db="EMBL/GenBank/DDBJ databases">
        <authorList>
            <person name="Totoki Y."/>
            <person name="Toyoda A."/>
            <person name="Takeda T."/>
            <person name="Sakaki Y."/>
            <person name="Tanaka A."/>
            <person name="Yokoyama S."/>
            <person name="Ohara O."/>
            <person name="Nagase T."/>
            <person name="Kikuno R.F."/>
        </authorList>
    </citation>
    <scope>NUCLEOTIDE SEQUENCE [LARGE SCALE MRNA]</scope>
    <source>
        <tissue>Brain</tissue>
    </source>
</reference>
<reference key="4">
    <citation type="journal article" date="2003" name="Nature">
        <title>The DNA sequence and analysis of human chromosome 6.</title>
        <authorList>
            <person name="Mungall A.J."/>
            <person name="Palmer S.A."/>
            <person name="Sims S.K."/>
            <person name="Edwards C.A."/>
            <person name="Ashurst J.L."/>
            <person name="Wilming L."/>
            <person name="Jones M.C."/>
            <person name="Horton R."/>
            <person name="Hunt S.E."/>
            <person name="Scott C.E."/>
            <person name="Gilbert J.G.R."/>
            <person name="Clamp M.E."/>
            <person name="Bethel G."/>
            <person name="Milne S."/>
            <person name="Ainscough R."/>
            <person name="Almeida J.P."/>
            <person name="Ambrose K.D."/>
            <person name="Andrews T.D."/>
            <person name="Ashwell R.I.S."/>
            <person name="Babbage A.K."/>
            <person name="Bagguley C.L."/>
            <person name="Bailey J."/>
            <person name="Banerjee R."/>
            <person name="Barker D.J."/>
            <person name="Barlow K.F."/>
            <person name="Bates K."/>
            <person name="Beare D.M."/>
            <person name="Beasley H."/>
            <person name="Beasley O."/>
            <person name="Bird C.P."/>
            <person name="Blakey S.E."/>
            <person name="Bray-Allen S."/>
            <person name="Brook J."/>
            <person name="Brown A.J."/>
            <person name="Brown J.Y."/>
            <person name="Burford D.C."/>
            <person name="Burrill W."/>
            <person name="Burton J."/>
            <person name="Carder C."/>
            <person name="Carter N.P."/>
            <person name="Chapman J.C."/>
            <person name="Clark S.Y."/>
            <person name="Clark G."/>
            <person name="Clee C.M."/>
            <person name="Clegg S."/>
            <person name="Cobley V."/>
            <person name="Collier R.E."/>
            <person name="Collins J.E."/>
            <person name="Colman L.K."/>
            <person name="Corby N.R."/>
            <person name="Coville G.J."/>
            <person name="Culley K.M."/>
            <person name="Dhami P."/>
            <person name="Davies J."/>
            <person name="Dunn M."/>
            <person name="Earthrowl M.E."/>
            <person name="Ellington A.E."/>
            <person name="Evans K.A."/>
            <person name="Faulkner L."/>
            <person name="Francis M.D."/>
            <person name="Frankish A."/>
            <person name="Frankland J."/>
            <person name="French L."/>
            <person name="Garner P."/>
            <person name="Garnett J."/>
            <person name="Ghori M.J."/>
            <person name="Gilby L.M."/>
            <person name="Gillson C.J."/>
            <person name="Glithero R.J."/>
            <person name="Grafham D.V."/>
            <person name="Grant M."/>
            <person name="Gribble S."/>
            <person name="Griffiths C."/>
            <person name="Griffiths M.N.D."/>
            <person name="Hall R."/>
            <person name="Halls K.S."/>
            <person name="Hammond S."/>
            <person name="Harley J.L."/>
            <person name="Hart E.A."/>
            <person name="Heath P.D."/>
            <person name="Heathcott R."/>
            <person name="Holmes S.J."/>
            <person name="Howden P.J."/>
            <person name="Howe K.L."/>
            <person name="Howell G.R."/>
            <person name="Huckle E."/>
            <person name="Humphray S.J."/>
            <person name="Humphries M.D."/>
            <person name="Hunt A.R."/>
            <person name="Johnson C.M."/>
            <person name="Joy A.A."/>
            <person name="Kay M."/>
            <person name="Keenan S.J."/>
            <person name="Kimberley A.M."/>
            <person name="King A."/>
            <person name="Laird G.K."/>
            <person name="Langford C."/>
            <person name="Lawlor S."/>
            <person name="Leongamornlert D.A."/>
            <person name="Leversha M."/>
            <person name="Lloyd C.R."/>
            <person name="Lloyd D.M."/>
            <person name="Loveland J.E."/>
            <person name="Lovell J."/>
            <person name="Martin S."/>
            <person name="Mashreghi-Mohammadi M."/>
            <person name="Maslen G.L."/>
            <person name="Matthews L."/>
            <person name="McCann O.T."/>
            <person name="McLaren S.J."/>
            <person name="McLay K."/>
            <person name="McMurray A."/>
            <person name="Moore M.J.F."/>
            <person name="Mullikin J.C."/>
            <person name="Niblett D."/>
            <person name="Nickerson T."/>
            <person name="Novik K.L."/>
            <person name="Oliver K."/>
            <person name="Overton-Larty E.K."/>
            <person name="Parker A."/>
            <person name="Patel R."/>
            <person name="Pearce A.V."/>
            <person name="Peck A.I."/>
            <person name="Phillimore B.J.C.T."/>
            <person name="Phillips S."/>
            <person name="Plumb R.W."/>
            <person name="Porter K.M."/>
            <person name="Ramsey Y."/>
            <person name="Ranby S.A."/>
            <person name="Rice C.M."/>
            <person name="Ross M.T."/>
            <person name="Searle S.M."/>
            <person name="Sehra H.K."/>
            <person name="Sheridan E."/>
            <person name="Skuce C.D."/>
            <person name="Smith S."/>
            <person name="Smith M."/>
            <person name="Spraggon L."/>
            <person name="Squares S.L."/>
            <person name="Steward C.A."/>
            <person name="Sycamore N."/>
            <person name="Tamlyn-Hall G."/>
            <person name="Tester J."/>
            <person name="Theaker A.J."/>
            <person name="Thomas D.W."/>
            <person name="Thorpe A."/>
            <person name="Tracey A."/>
            <person name="Tromans A."/>
            <person name="Tubby B."/>
            <person name="Wall M."/>
            <person name="Wallis J.M."/>
            <person name="West A.P."/>
            <person name="White S.S."/>
            <person name="Whitehead S.L."/>
            <person name="Whittaker H."/>
            <person name="Wild A."/>
            <person name="Willey D.J."/>
            <person name="Wilmer T.E."/>
            <person name="Wood J.M."/>
            <person name="Wray P.W."/>
            <person name="Wyatt J.C."/>
            <person name="Young L."/>
            <person name="Younger R.M."/>
            <person name="Bentley D.R."/>
            <person name="Coulson A."/>
            <person name="Durbin R.M."/>
            <person name="Hubbard T."/>
            <person name="Sulston J.E."/>
            <person name="Dunham I."/>
            <person name="Rogers J."/>
            <person name="Beck S."/>
        </authorList>
    </citation>
    <scope>NUCLEOTIDE SEQUENCE [LARGE SCALE GENOMIC DNA]</scope>
</reference>
<reference key="5">
    <citation type="submission" date="2005-09" db="EMBL/GenBank/DDBJ databases">
        <authorList>
            <person name="Mural R.J."/>
            <person name="Istrail S."/>
            <person name="Sutton G.G."/>
            <person name="Florea L."/>
            <person name="Halpern A.L."/>
            <person name="Mobarry C.M."/>
            <person name="Lippert R."/>
            <person name="Walenz B."/>
            <person name="Shatkay H."/>
            <person name="Dew I."/>
            <person name="Miller J.R."/>
            <person name="Flanigan M.J."/>
            <person name="Edwards N.J."/>
            <person name="Bolanos R."/>
            <person name="Fasulo D."/>
            <person name="Halldorsson B.V."/>
            <person name="Hannenhalli S."/>
            <person name="Turner R."/>
            <person name="Yooseph S."/>
            <person name="Lu F."/>
            <person name="Nusskern D.R."/>
            <person name="Shue B.C."/>
            <person name="Zheng X.H."/>
            <person name="Zhong F."/>
            <person name="Delcher A.L."/>
            <person name="Huson D.H."/>
            <person name="Kravitz S.A."/>
            <person name="Mouchard L."/>
            <person name="Reinert K."/>
            <person name="Remington K.A."/>
            <person name="Clark A.G."/>
            <person name="Waterman M.S."/>
            <person name="Eichler E.E."/>
            <person name="Adams M.D."/>
            <person name="Hunkapiller M.W."/>
            <person name="Myers E.W."/>
            <person name="Venter J.C."/>
        </authorList>
    </citation>
    <scope>NUCLEOTIDE SEQUENCE [LARGE SCALE GENOMIC DNA]</scope>
</reference>
<reference key="6">
    <citation type="journal article" date="2007" name="Blood">
        <title>Bcr-Abl signaling through the PI-3/S6 kinase pathway inhibits nuclear translocation of the transcription factor Bach2, which represses the antiapoptotic factor heme oxygenase-1.</title>
        <authorList>
            <person name="Yoshida C."/>
            <person name="Yoshida F."/>
            <person name="Sears D.E."/>
            <person name="Hart S.M."/>
            <person name="Ikebe D."/>
            <person name="Muto A."/>
            <person name="Basu S."/>
            <person name="Igarashi K."/>
            <person name="Melo J.V."/>
        </authorList>
    </citation>
    <scope>FUNCTION</scope>
    <scope>SUBCELLULAR LOCATION</scope>
    <scope>PHOSPHORYLATION AT SER-521</scope>
    <scope>MUTAGENESIS OF SER-521</scope>
</reference>
<reference key="7">
    <citation type="journal article" date="2017" name="Nat. Struct. Mol. Biol.">
        <title>Site-specific mapping of the human SUMO proteome reveals co-modification with phosphorylation.</title>
        <authorList>
            <person name="Hendriks I.A."/>
            <person name="Lyon D."/>
            <person name="Young C."/>
            <person name="Jensen L.J."/>
            <person name="Vertegaal A.C."/>
            <person name="Nielsen M.L."/>
        </authorList>
    </citation>
    <scope>SUMOYLATION [LARGE SCALE ANALYSIS] AT LYS-382 AND LYS-421</scope>
    <scope>IDENTIFICATION BY MASS SPECTROMETRY [LARGE SCALE ANALYSIS]</scope>
</reference>
<reference key="8">
    <citation type="journal article" date="2017" name="Nat. Immunol.">
        <title>BACH2 immunodeficiency illustrates an association between super-enhancers and haploinsufficiency.</title>
        <authorList>
            <person name="Afzali B."/>
            <person name="Groenholm J."/>
            <person name="Vandrovcova J."/>
            <person name="O'Brien C."/>
            <person name="Sun H.W."/>
            <person name="Vanderleyden I."/>
            <person name="Davis F.P."/>
            <person name="Khoder A."/>
            <person name="Zhang Y."/>
            <person name="Hegazy A.N."/>
            <person name="Villarino A.V."/>
            <person name="Palmer I.W."/>
            <person name="Kaufman J."/>
            <person name="Watts N.R."/>
            <person name="Kazemian M."/>
            <person name="Kamenyeva O."/>
            <person name="Keith J."/>
            <person name="Sayed A."/>
            <person name="Kasperaviciute D."/>
            <person name="Mueller M."/>
            <person name="Hughes J.D."/>
            <person name="Fuss I.J."/>
            <person name="Sadiyah M.F."/>
            <person name="Montgomery-Recht K."/>
            <person name="McElwee J."/>
            <person name="Restifo N.P."/>
            <person name="Strober W."/>
            <person name="Linterman M.A."/>
            <person name="Wingfield P.T."/>
            <person name="Uhlig H.H."/>
            <person name="Roychoudhuri R."/>
            <person name="Aitman T.J."/>
            <person name="Kelleher P."/>
            <person name="Lenardo M.J."/>
            <person name="O'Shea J.J."/>
            <person name="Cooper N."/>
            <person name="Laurence A.D.J."/>
        </authorList>
    </citation>
    <scope>FUNCTION</scope>
    <scope>SUBCELLULAR LOCATION</scope>
    <scope>INVOLVEMENT IN IMD60</scope>
    <scope>VARIANTS IMD60 PRO-24 AND LYS-788</scope>
    <scope>CHARACTERIZATION OF VARIANTS IMD60 PRO-24 AND LYS-788</scope>
</reference>
<reference key="9">
    <citation type="journal article" date="2012" name="Acta Crystallogr. D">
        <title>The structure of the Bach2 POZ-domain dimer reveals an intersubunit disulfide bond.</title>
        <authorList>
            <person name="Rosbrook G.O."/>
            <person name="Stead M.A."/>
            <person name="Carr S.B."/>
            <person name="Wright S.C."/>
        </authorList>
    </citation>
    <scope>X-RAY CRYSTALLOGRAPHY (2.1 ANGSTROMS) OF 9-129</scope>
    <scope>SUBUNIT</scope>
    <scope>INTERCHAIN DISULFIDE BOND</scope>
</reference>
<dbReference type="EMBL" id="AF357835">
    <property type="protein sequence ID" value="AAK48898.1"/>
    <property type="molecule type" value="mRNA"/>
</dbReference>
<dbReference type="EMBL" id="AJ271878">
    <property type="protein sequence ID" value="CAC28130.1"/>
    <property type="molecule type" value="mRNA"/>
</dbReference>
<dbReference type="EMBL" id="AB208889">
    <property type="protein sequence ID" value="BAD92126.1"/>
    <property type="status" value="ALT_INIT"/>
    <property type="molecule type" value="mRNA"/>
</dbReference>
<dbReference type="EMBL" id="AL353692">
    <property type="status" value="NOT_ANNOTATED_CDS"/>
    <property type="molecule type" value="Genomic_DNA"/>
</dbReference>
<dbReference type="EMBL" id="AL121787">
    <property type="status" value="NOT_ANNOTATED_CDS"/>
    <property type="molecule type" value="Genomic_DNA"/>
</dbReference>
<dbReference type="EMBL" id="CH471051">
    <property type="protein sequence ID" value="EAW48530.1"/>
    <property type="molecule type" value="Genomic_DNA"/>
</dbReference>
<dbReference type="EMBL" id="CH471051">
    <property type="protein sequence ID" value="EAW48531.1"/>
    <property type="molecule type" value="Genomic_DNA"/>
</dbReference>
<dbReference type="EMBL" id="CH471051">
    <property type="protein sequence ID" value="EAW48532.1"/>
    <property type="molecule type" value="Genomic_DNA"/>
</dbReference>
<dbReference type="EMBL" id="CH471051">
    <property type="protein sequence ID" value="EAW48533.1"/>
    <property type="molecule type" value="Genomic_DNA"/>
</dbReference>
<dbReference type="EMBL" id="CH471051">
    <property type="protein sequence ID" value="EAW48534.1"/>
    <property type="molecule type" value="Genomic_DNA"/>
</dbReference>
<dbReference type="CCDS" id="CCDS5026.1"/>
<dbReference type="RefSeq" id="NP_001164265.1">
    <property type="nucleotide sequence ID" value="NM_001170794.2"/>
</dbReference>
<dbReference type="RefSeq" id="NP_068585.1">
    <property type="nucleotide sequence ID" value="NM_021813.4"/>
</dbReference>
<dbReference type="RefSeq" id="XP_005248816.1">
    <property type="nucleotide sequence ID" value="XM_005248759.4"/>
</dbReference>
<dbReference type="RefSeq" id="XP_011534341.1">
    <property type="nucleotide sequence ID" value="XM_011536039.2"/>
</dbReference>
<dbReference type="RefSeq" id="XP_011534342.1">
    <property type="nucleotide sequence ID" value="XM_011536040.2"/>
</dbReference>
<dbReference type="RefSeq" id="XP_016866654.1">
    <property type="nucleotide sequence ID" value="XM_017011165.1"/>
</dbReference>
<dbReference type="RefSeq" id="XP_016866655.1">
    <property type="nucleotide sequence ID" value="XM_017011166.1"/>
</dbReference>
<dbReference type="PDB" id="3OHU">
    <property type="method" value="X-ray"/>
    <property type="resolution" value="2.10 A"/>
    <property type="chains" value="A/B/C/D/E/F=9-129"/>
</dbReference>
<dbReference type="PDB" id="3OHV">
    <property type="method" value="X-ray"/>
    <property type="resolution" value="2.20 A"/>
    <property type="chains" value="A/B/C/D/E/F=9-129"/>
</dbReference>
<dbReference type="PDBsum" id="3OHU"/>
<dbReference type="PDBsum" id="3OHV"/>
<dbReference type="SMR" id="Q9BYV9"/>
<dbReference type="BioGRID" id="121913">
    <property type="interactions" value="86"/>
</dbReference>
<dbReference type="ComplexPortal" id="CPX-2471">
    <property type="entry name" value="bZIP transcription factor complex, BACH2-NFE2L3"/>
</dbReference>
<dbReference type="ComplexPortal" id="CPX-2473">
    <property type="entry name" value="bZIP transcription factor complex, BACH2-NFE2L1"/>
</dbReference>
<dbReference type="ComplexPortal" id="CPX-2479">
    <property type="entry name" value="bZIP transcription factor complex, BACH2-MAFB"/>
</dbReference>
<dbReference type="ComplexPortal" id="CPX-2482">
    <property type="entry name" value="bZIP transcription factor complex, BACH2-MAFK"/>
</dbReference>
<dbReference type="ComplexPortal" id="CPX-2483">
    <property type="entry name" value="bZIP transcription factor complex, BACH2-MAF"/>
</dbReference>
<dbReference type="ComplexPortal" id="CPX-2484">
    <property type="entry name" value="bZIP transcription factor complex, BACH2-MAFF"/>
</dbReference>
<dbReference type="ComplexPortal" id="CPX-2485">
    <property type="entry name" value="bZIP transcription factor complex, BACH2-MAFG"/>
</dbReference>
<dbReference type="ComplexPortal" id="CPX-2487">
    <property type="entry name" value="bZIP transcription factor complex, BACH2-BACH2"/>
</dbReference>
<dbReference type="ComplexPortal" id="CPX-7093">
    <property type="entry name" value="bZIP transcription factor complex, BACH2-BATF3"/>
</dbReference>
<dbReference type="FunCoup" id="Q9BYV9">
    <property type="interactions" value="2124"/>
</dbReference>
<dbReference type="IntAct" id="Q9BYV9">
    <property type="interactions" value="80"/>
</dbReference>
<dbReference type="STRING" id="9606.ENSP00000257749"/>
<dbReference type="ChEMBL" id="CHEMBL5069364"/>
<dbReference type="GlyCosmos" id="Q9BYV9">
    <property type="glycosylation" value="9 sites, 2 glycans"/>
</dbReference>
<dbReference type="GlyGen" id="Q9BYV9">
    <property type="glycosylation" value="11 sites, 2 O-linked glycans (9 sites)"/>
</dbReference>
<dbReference type="iPTMnet" id="Q9BYV9"/>
<dbReference type="PhosphoSitePlus" id="Q9BYV9"/>
<dbReference type="BioMuta" id="BACH2"/>
<dbReference type="DMDM" id="17433037"/>
<dbReference type="jPOST" id="Q9BYV9"/>
<dbReference type="MassIVE" id="Q9BYV9"/>
<dbReference type="PaxDb" id="9606-ENSP00000257749"/>
<dbReference type="PeptideAtlas" id="Q9BYV9"/>
<dbReference type="ProteomicsDB" id="79726"/>
<dbReference type="Antibodypedia" id="31919">
    <property type="antibodies" value="234 antibodies from 30 providers"/>
</dbReference>
<dbReference type="DNASU" id="60468"/>
<dbReference type="Ensembl" id="ENST00000257749.9">
    <property type="protein sequence ID" value="ENSP00000257749.4"/>
    <property type="gene ID" value="ENSG00000112182.16"/>
</dbReference>
<dbReference type="Ensembl" id="ENST00000343122.7">
    <property type="protein sequence ID" value="ENSP00000345642.3"/>
    <property type="gene ID" value="ENSG00000112182.16"/>
</dbReference>
<dbReference type="Ensembl" id="ENST00000406998.7">
    <property type="protein sequence ID" value="ENSP00000384145.3"/>
    <property type="gene ID" value="ENSG00000112182.16"/>
</dbReference>
<dbReference type="Ensembl" id="ENST00000453877.6">
    <property type="protein sequence ID" value="ENSP00000397668.2"/>
    <property type="gene ID" value="ENSG00000112182.16"/>
</dbReference>
<dbReference type="Ensembl" id="ENST00000695952.1">
    <property type="protein sequence ID" value="ENSP00000512284.1"/>
    <property type="gene ID" value="ENSG00000112182.16"/>
</dbReference>
<dbReference type="GeneID" id="60468"/>
<dbReference type="KEGG" id="hsa:60468"/>
<dbReference type="MANE-Select" id="ENST00000257749.9">
    <property type="protein sequence ID" value="ENSP00000257749.4"/>
    <property type="RefSeq nucleotide sequence ID" value="NM_021813.4"/>
    <property type="RefSeq protein sequence ID" value="NP_068585.1"/>
</dbReference>
<dbReference type="UCSC" id="uc003pnw.4">
    <property type="organism name" value="human"/>
</dbReference>
<dbReference type="AGR" id="HGNC:14078"/>
<dbReference type="CTD" id="60468"/>
<dbReference type="DisGeNET" id="60468"/>
<dbReference type="GeneCards" id="BACH2"/>
<dbReference type="HGNC" id="HGNC:14078">
    <property type="gene designation" value="BACH2"/>
</dbReference>
<dbReference type="HPA" id="ENSG00000112182">
    <property type="expression patterns" value="Group enriched (bone marrow, lymphoid tissue)"/>
</dbReference>
<dbReference type="MalaCards" id="BACH2"/>
<dbReference type="MIM" id="605394">
    <property type="type" value="gene"/>
</dbReference>
<dbReference type="MIM" id="618394">
    <property type="type" value="phenotype"/>
</dbReference>
<dbReference type="neXtProt" id="NX_Q9BYV9"/>
<dbReference type="OpenTargets" id="ENSG00000112182"/>
<dbReference type="PharmGKB" id="PA25235"/>
<dbReference type="VEuPathDB" id="HostDB:ENSG00000112182"/>
<dbReference type="eggNOG" id="KOG3863">
    <property type="taxonomic scope" value="Eukaryota"/>
</dbReference>
<dbReference type="GeneTree" id="ENSGT00940000158228"/>
<dbReference type="HOGENOM" id="CLU_015243_0_0_1"/>
<dbReference type="InParanoid" id="Q9BYV9"/>
<dbReference type="OMA" id="MMGDGMY"/>
<dbReference type="OrthoDB" id="6365358at2759"/>
<dbReference type="PAN-GO" id="Q9BYV9">
    <property type="GO annotations" value="3 GO annotations based on evolutionary models"/>
</dbReference>
<dbReference type="PhylomeDB" id="Q9BYV9"/>
<dbReference type="TreeFam" id="TF326681"/>
<dbReference type="PathwayCommons" id="Q9BYV9"/>
<dbReference type="SignaLink" id="Q9BYV9"/>
<dbReference type="SIGNOR" id="Q9BYV9"/>
<dbReference type="BioGRID-ORCS" id="60468">
    <property type="hits" value="14 hits in 1208 CRISPR screens"/>
</dbReference>
<dbReference type="ChiTaRS" id="BACH2">
    <property type="organism name" value="human"/>
</dbReference>
<dbReference type="EvolutionaryTrace" id="Q9BYV9"/>
<dbReference type="GeneWiki" id="BACH2"/>
<dbReference type="GenomeRNAi" id="60468"/>
<dbReference type="Pharos" id="Q9BYV9">
    <property type="development level" value="Tbio"/>
</dbReference>
<dbReference type="PRO" id="PR:Q9BYV9"/>
<dbReference type="Proteomes" id="UP000005640">
    <property type="component" value="Chromosome 6"/>
</dbReference>
<dbReference type="RNAct" id="Q9BYV9">
    <property type="molecule type" value="protein"/>
</dbReference>
<dbReference type="Bgee" id="ENSG00000112182">
    <property type="expression patterns" value="Expressed in cortical plate and 174 other cell types or tissues"/>
</dbReference>
<dbReference type="ExpressionAtlas" id="Q9BYV9">
    <property type="expression patterns" value="baseline and differential"/>
</dbReference>
<dbReference type="GO" id="GO:0000785">
    <property type="term" value="C:chromatin"/>
    <property type="evidence" value="ECO:0000247"/>
    <property type="project" value="NTNU_SB"/>
</dbReference>
<dbReference type="GO" id="GO:0005829">
    <property type="term" value="C:cytosol"/>
    <property type="evidence" value="ECO:0000314"/>
    <property type="project" value="HPA"/>
</dbReference>
<dbReference type="GO" id="GO:0005654">
    <property type="term" value="C:nucleoplasm"/>
    <property type="evidence" value="ECO:0000314"/>
    <property type="project" value="HPA"/>
</dbReference>
<dbReference type="GO" id="GO:0005634">
    <property type="term" value="C:nucleus"/>
    <property type="evidence" value="ECO:0000303"/>
    <property type="project" value="ComplexPortal"/>
</dbReference>
<dbReference type="GO" id="GO:0090575">
    <property type="term" value="C:RNA polymerase II transcription regulator complex"/>
    <property type="evidence" value="ECO:0000353"/>
    <property type="project" value="ComplexPortal"/>
</dbReference>
<dbReference type="GO" id="GO:0000981">
    <property type="term" value="F:DNA-binding transcription factor activity, RNA polymerase II-specific"/>
    <property type="evidence" value="ECO:0000247"/>
    <property type="project" value="NTNU_SB"/>
</dbReference>
<dbReference type="GO" id="GO:0001227">
    <property type="term" value="F:DNA-binding transcription repressor activity, RNA polymerase II-specific"/>
    <property type="evidence" value="ECO:0007669"/>
    <property type="project" value="Ensembl"/>
</dbReference>
<dbReference type="GO" id="GO:0000978">
    <property type="term" value="F:RNA polymerase II cis-regulatory region sequence-specific DNA binding"/>
    <property type="evidence" value="ECO:0000318"/>
    <property type="project" value="GO_Central"/>
</dbReference>
<dbReference type="GO" id="GO:1990837">
    <property type="term" value="F:sequence-specific double-stranded DNA binding"/>
    <property type="evidence" value="ECO:0000314"/>
    <property type="project" value="ARUK-UCL"/>
</dbReference>
<dbReference type="GO" id="GO:0051170">
    <property type="term" value="P:import into nucleus"/>
    <property type="evidence" value="ECO:0000250"/>
    <property type="project" value="UniProtKB"/>
</dbReference>
<dbReference type="GO" id="GO:0000122">
    <property type="term" value="P:negative regulation of transcription by RNA polymerase II"/>
    <property type="evidence" value="ECO:0000303"/>
    <property type="project" value="ComplexPortal"/>
</dbReference>
<dbReference type="GO" id="GO:0090721">
    <property type="term" value="P:primary adaptive immune response involving T cells and B cells"/>
    <property type="evidence" value="ECO:0000315"/>
    <property type="project" value="UniProtKB"/>
</dbReference>
<dbReference type="GO" id="GO:0006357">
    <property type="term" value="P:regulation of transcription by RNA polymerase II"/>
    <property type="evidence" value="ECO:0000318"/>
    <property type="project" value="GO_Central"/>
</dbReference>
<dbReference type="CDD" id="cd18278">
    <property type="entry name" value="BTB_POZ_BACH2"/>
    <property type="match status" value="1"/>
</dbReference>
<dbReference type="CDD" id="cd14719">
    <property type="entry name" value="bZIP_BACH"/>
    <property type="match status" value="1"/>
</dbReference>
<dbReference type="FunFam" id="1.10.880.10:FF:000002">
    <property type="entry name" value="transcription regulator protein BACH2 isoform X1"/>
    <property type="match status" value="1"/>
</dbReference>
<dbReference type="FunFam" id="3.30.710.10:FF:000033">
    <property type="entry name" value="transcription regulator protein BACH2 isoform X1"/>
    <property type="match status" value="1"/>
</dbReference>
<dbReference type="Gene3D" id="3.30.710.10">
    <property type="entry name" value="Potassium Channel Kv1.1, Chain A"/>
    <property type="match status" value="1"/>
</dbReference>
<dbReference type="Gene3D" id="1.10.880.10">
    <property type="entry name" value="Transcription factor, Skn-1-like, DNA-binding domain"/>
    <property type="match status" value="1"/>
</dbReference>
<dbReference type="InterPro" id="IPR000210">
    <property type="entry name" value="BTB/POZ_dom"/>
</dbReference>
<dbReference type="InterPro" id="IPR004827">
    <property type="entry name" value="bZIP"/>
</dbReference>
<dbReference type="InterPro" id="IPR043321">
    <property type="entry name" value="bZIP_BACH"/>
</dbReference>
<dbReference type="InterPro" id="IPR004826">
    <property type="entry name" value="bZIP_Maf"/>
</dbReference>
<dbReference type="InterPro" id="IPR046347">
    <property type="entry name" value="bZIP_sf"/>
</dbReference>
<dbReference type="InterPro" id="IPR011333">
    <property type="entry name" value="SKP1/BTB/POZ_sf"/>
</dbReference>
<dbReference type="InterPro" id="IPR008917">
    <property type="entry name" value="TF_DNA-bd_sf"/>
</dbReference>
<dbReference type="InterPro" id="IPR050457">
    <property type="entry name" value="ZnFinger_BTB_dom_contain"/>
</dbReference>
<dbReference type="PANTHER" id="PTHR46105">
    <property type="entry name" value="AGAP004733-PA"/>
    <property type="match status" value="1"/>
</dbReference>
<dbReference type="PANTHER" id="PTHR46105:SF8">
    <property type="entry name" value="TRANSCRIPTION REGULATOR PROTEIN BACH2"/>
    <property type="match status" value="1"/>
</dbReference>
<dbReference type="Pfam" id="PF00651">
    <property type="entry name" value="BTB"/>
    <property type="match status" value="1"/>
</dbReference>
<dbReference type="Pfam" id="PF03131">
    <property type="entry name" value="bZIP_Maf"/>
    <property type="match status" value="1"/>
</dbReference>
<dbReference type="SMART" id="SM00338">
    <property type="entry name" value="BRLZ"/>
    <property type="match status" value="1"/>
</dbReference>
<dbReference type="SMART" id="SM00225">
    <property type="entry name" value="BTB"/>
    <property type="match status" value="1"/>
</dbReference>
<dbReference type="SUPFAM" id="SSF47454">
    <property type="entry name" value="A DNA-binding domain in eukaryotic transcription factors"/>
    <property type="match status" value="1"/>
</dbReference>
<dbReference type="SUPFAM" id="SSF57959">
    <property type="entry name" value="Leucine zipper domain"/>
    <property type="match status" value="1"/>
</dbReference>
<dbReference type="SUPFAM" id="SSF54695">
    <property type="entry name" value="POZ domain"/>
    <property type="match status" value="1"/>
</dbReference>
<dbReference type="PROSITE" id="PS50097">
    <property type="entry name" value="BTB"/>
    <property type="match status" value="1"/>
</dbReference>
<dbReference type="PROSITE" id="PS50217">
    <property type="entry name" value="BZIP"/>
    <property type="match status" value="1"/>
</dbReference>
<dbReference type="PROSITE" id="PS00036">
    <property type="entry name" value="BZIP_BASIC"/>
    <property type="match status" value="1"/>
</dbReference>
<gene>
    <name type="primary">BACH2</name>
</gene>
<sequence>MSVDEKPDSPMYVYESTVHCTNILLGLNDQRKKDILCDVTLIVERKEFRAHRAVLAACSEYFWQALVGQTKNDLVVSLPEEVTARGFGPLLQFAYTAKLLLSRENIREVIRCAEFLRMHNLEDSCFSFLQTQLLNSEDGLFVCRKDAACQRPHEDCENSAGEEEDEEEETMDSETAKMACPRDQMLPEPISFEAAAIPVAEKEEALLPEPDVPTDTKESSEKDALTQYPRYKKYQLACTKNVYNASSHSTSGFASTFREDNSSNSLKPGLARGQIKSEPPSEENEEESITLCLSGDEPDAKDRAGDVEMDRKQPSPAPTPTAPAGAACLERSRSVASPSCLRSLFSITKSVELSGLPSTSQQHFARSPACPFDKGITQGDLKTDYTPFTGNYGQPHVGQKEVSNFTMGSPLRGPGLEALCKQEGELDRRSVIFSSSACDQVSTSVHSYSGVSSLDKDLSEPVPKGLWVGAGQSLPSSQAYSHGGLMADHLPGRMRPNTSCPVPIKVCPRSPPLETRTRTSSSCSSYSYAEDGSGGSPCSLPLCEFSSSPCSQGARFLATEHQEPGLMGDGMYNQVRPQIKCEQSYGTNSSDESGSFSEADSESCPVQDRGQEVKLPFPVDQITDLPRNDFQMMIKMHKLTSEQLEFIHDVRRRSKNRIAAQRCRKRKLDCIQNLECEIRKLVCEKEKLLSERNQLKACMGELLDNFSCLSQEVCRDIQSPEQIQALHRYCPVLRPMDLPTASSINPAPLGAEQNIAASQCAVGENVPCCLEPGAAPPGPPWAPSNTSENCTSGRRLEGTDPGTFSERGPPLEPRSQTVTVDFCQEMTDKCTTDEQPRKDYT</sequence>
<keyword id="KW-0002">3D-structure</keyword>
<keyword id="KW-0010">Activator</keyword>
<keyword id="KW-0963">Cytoplasm</keyword>
<keyword id="KW-0225">Disease variant</keyword>
<keyword id="KW-1015">Disulfide bond</keyword>
<keyword id="KW-0238">DNA-binding</keyword>
<keyword id="KW-1017">Isopeptide bond</keyword>
<keyword id="KW-0539">Nucleus</keyword>
<keyword id="KW-0597">Phosphoprotein</keyword>
<keyword id="KW-1267">Proteomics identification</keyword>
<keyword id="KW-1185">Reference proteome</keyword>
<keyword id="KW-0678">Repressor</keyword>
<keyword id="KW-0804">Transcription</keyword>
<keyword id="KW-0805">Transcription regulation</keyword>
<keyword id="KW-0832">Ubl conjugation</keyword>
<comment type="function">
    <text evidence="2 6 8">Transcriptional regulator that acts as a repressor or activator (By similarity). Binds to Maf recognition elements (MARE) (By similarity). Plays an important role in coordinating transcription activation and repression by MAFK (By similarity). Induces apoptosis in response to oxidative stress through repression of the antiapoptotic factor HMOX1 (PubMed:17018862). Positively regulates the nuclear import of actin (By similarity). Is a key regulator of adaptive immunity, crucial for the maintenance of regulatory T-cell function and B-cell maturation (PubMed:28530713).</text>
</comment>
<comment type="subunit">
    <text evidence="2 7">Homodimer; disulfide-linked (PubMed:22194330). Heterodimer of BACH2 and Maf-related transcription factors (By similarity).</text>
</comment>
<comment type="interaction">
    <interactant intactId="EBI-1642333">
        <id>Q9BYV9</id>
    </interactant>
    <interactant intactId="EBI-14493093">
        <id>Q3KP44</id>
        <label>ANKRD55</label>
    </interactant>
    <organismsDiffer>false</organismsDiffer>
    <experiments>3</experiments>
</comment>
<comment type="interaction">
    <interactant intactId="EBI-1642333">
        <id>Q9BYV9</id>
    </interactant>
    <interactant intactId="EBI-541426">
        <id>Q9BXS5</id>
        <label>AP1M1</label>
    </interactant>
    <organismsDiffer>false</organismsDiffer>
    <experiments>3</experiments>
</comment>
<comment type="interaction">
    <interactant intactId="EBI-1642333">
        <id>Q9BYV9</id>
    </interactant>
    <interactant intactId="EBI-742750">
        <id>Q8TBE0</id>
        <label>BAHD1</label>
    </interactant>
    <organismsDiffer>false</organismsDiffer>
    <experiments>3</experiments>
</comment>
<comment type="interaction">
    <interactant intactId="EBI-1642333">
        <id>Q9BYV9</id>
    </interactant>
    <interactant intactId="EBI-10312707">
        <id>Q9NR55</id>
        <label>BATF3</label>
    </interactant>
    <organismsDiffer>false</organismsDiffer>
    <experiments>6</experiments>
</comment>
<comment type="interaction">
    <interactant intactId="EBI-1642333">
        <id>Q9BYV9</id>
    </interactant>
    <interactant intactId="EBI-712912">
        <id>Q9HC52</id>
        <label>CBX8</label>
    </interactant>
    <organismsDiffer>false</organismsDiffer>
    <experiments>3</experiments>
</comment>
<comment type="interaction">
    <interactant intactId="EBI-1642333">
        <id>Q9BYV9</id>
    </interactant>
    <interactant intactId="EBI-740814">
        <id>Q8N715</id>
        <label>CCDC185</label>
    </interactant>
    <organismsDiffer>false</organismsDiffer>
    <experiments>3</experiments>
</comment>
<comment type="interaction">
    <interactant intactId="EBI-1642333">
        <id>Q9BYV9</id>
    </interactant>
    <interactant intactId="EBI-10250303">
        <id>Q6IPU0</id>
        <label>CENPP</label>
    </interactant>
    <organismsDiffer>false</organismsDiffer>
    <experiments>3</experiments>
</comment>
<comment type="interaction">
    <interactant intactId="EBI-1642333">
        <id>Q9BYV9</id>
    </interactant>
    <interactant intactId="EBI-10245749">
        <id>Q5T655</id>
        <label>CFAP58</label>
    </interactant>
    <organismsDiffer>false</organismsDiffer>
    <experiments>3</experiments>
</comment>
<comment type="interaction">
    <interactant intactId="EBI-1642333">
        <id>Q9BYV9</id>
    </interactant>
    <interactant intactId="EBI-8636823">
        <id>Q9UBR2</id>
        <label>CTSZ</label>
    </interactant>
    <organismsDiffer>false</organismsDiffer>
    <experiments>3</experiments>
</comment>
<comment type="interaction">
    <interactant intactId="EBI-1642333">
        <id>Q9BYV9</id>
    </interactant>
    <interactant intactId="EBI-5453285">
        <id>Q2TBE0</id>
        <label>CWF19L2</label>
    </interactant>
    <organismsDiffer>false</organismsDiffer>
    <experiments>3</experiments>
</comment>
<comment type="interaction">
    <interactant intactId="EBI-1642333">
        <id>Q9BYV9</id>
    </interactant>
    <interactant intactId="EBI-742350">
        <id>Q14241</id>
        <label>ELOA</label>
    </interactant>
    <organismsDiffer>false</organismsDiffer>
    <experiments>3</experiments>
</comment>
<comment type="interaction">
    <interactant intactId="EBI-1642333">
        <id>Q9BYV9</id>
    </interactant>
    <interactant intactId="EBI-12047821">
        <id>Q6UWV6</id>
        <label>ENPP7</label>
    </interactant>
    <organismsDiffer>false</organismsDiffer>
    <experiments>3</experiments>
</comment>
<comment type="interaction">
    <interactant intactId="EBI-1642333">
        <id>Q9BYV9</id>
    </interactant>
    <interactant intactId="EBI-719941">
        <id>Q3B820</id>
        <label>FAM161A</label>
    </interactant>
    <organismsDiffer>false</organismsDiffer>
    <experiments>3</experiments>
</comment>
<comment type="interaction">
    <interactant intactId="EBI-1642333">
        <id>Q9BYV9</id>
    </interactant>
    <interactant intactId="EBI-2513774">
        <id>O95363</id>
        <label>FARS2</label>
    </interactant>
    <organismsDiffer>false</organismsDiffer>
    <experiments>3</experiments>
</comment>
<comment type="interaction">
    <interactant intactId="EBI-1642333">
        <id>Q9BYV9</id>
    </interactant>
    <interactant intactId="EBI-3893419">
        <id>P15408</id>
        <label>FOSL2</label>
    </interactant>
    <organismsDiffer>false</organismsDiffer>
    <experiments>5</experiments>
</comment>
<comment type="interaction">
    <interactant intactId="EBI-1642333">
        <id>Q9BYV9</id>
    </interactant>
    <interactant intactId="EBI-740641">
        <id>Q9NP66</id>
        <label>HMG20A</label>
    </interactant>
    <organismsDiffer>false</organismsDiffer>
    <experiments>3</experiments>
</comment>
<comment type="interaction">
    <interactant intactId="EBI-1642333">
        <id>Q9BYV9</id>
    </interactant>
    <interactant intactId="EBI-12146621">
        <id>Q6ZSG2</id>
        <label>INSYN2A</label>
    </interactant>
    <organismsDiffer>false</organismsDiffer>
    <experiments>3</experiments>
</comment>
<comment type="interaction">
    <interactant intactId="EBI-1642333">
        <id>Q9BYV9</id>
    </interactant>
    <interactant intactId="EBI-399080">
        <id>Q92993</id>
        <label>KAT5</label>
    </interactant>
    <organismsDiffer>false</organismsDiffer>
    <experiments>3</experiments>
</comment>
<comment type="interaction">
    <interactant intactId="EBI-1642333">
        <id>Q9BYV9</id>
    </interactant>
    <interactant intactId="EBI-10198848">
        <id>Q9P127</id>
        <label>LUZP4</label>
    </interactant>
    <organismsDiffer>false</organismsDiffer>
    <experiments>3</experiments>
</comment>
<comment type="interaction">
    <interactant intactId="EBI-1642333">
        <id>Q9BYV9</id>
    </interactant>
    <interactant intactId="EBI-721128">
        <id>Q9ULX9</id>
        <label>MAFF</label>
    </interactant>
    <organismsDiffer>false</organismsDiffer>
    <experiments>5</experiments>
</comment>
<comment type="interaction">
    <interactant intactId="EBI-1642333">
        <id>Q9BYV9</id>
    </interactant>
    <interactant intactId="EBI-713514">
        <id>O15525</id>
        <label>MAFG</label>
    </interactant>
    <organismsDiffer>false</organismsDiffer>
    <experiments>6</experiments>
</comment>
<comment type="interaction">
    <interactant intactId="EBI-1642333">
        <id>Q9BYV9</id>
    </interactant>
    <interactant intactId="EBI-2559512">
        <id>O60675</id>
        <label>MAFK</label>
    </interactant>
    <organismsDiffer>false</organismsDiffer>
    <experiments>4</experiments>
</comment>
<comment type="interaction">
    <interactant intactId="EBI-1642333">
        <id>Q9BYV9</id>
    </interactant>
    <interactant intactId="EBI-348259">
        <id>Q96EZ8</id>
        <label>MCRS1</label>
    </interactant>
    <organismsDiffer>false</organismsDiffer>
    <experiments>3</experiments>
</comment>
<comment type="interaction">
    <interactant intactId="EBI-1642333">
        <id>Q9BYV9</id>
    </interactant>
    <interactant intactId="EBI-8852072">
        <id>Q9UH92-3</id>
        <label>MLX</label>
    </interactant>
    <organismsDiffer>false</organismsDiffer>
    <experiments>3</experiments>
</comment>
<comment type="interaction">
    <interactant intactId="EBI-1642333">
        <id>Q9BYV9</id>
    </interactant>
    <interactant intactId="EBI-398874">
        <id>Q9UBU9</id>
        <label>NXF1</label>
    </interactant>
    <organismsDiffer>false</organismsDiffer>
    <experiments>3</experiments>
</comment>
<comment type="interaction">
    <interactant intactId="EBI-1642333">
        <id>Q9BYV9</id>
    </interactant>
    <interactant intactId="EBI-357745">
        <id>P62195</id>
        <label>PSMC5</label>
    </interactant>
    <organismsDiffer>false</organismsDiffer>
    <experiments>3</experiments>
</comment>
<comment type="interaction">
    <interactant intactId="EBI-1642333">
        <id>Q9BYV9</id>
    </interactant>
    <interactant intactId="EBI-358122">
        <id>P32969</id>
        <label>RPL9P9</label>
    </interactant>
    <organismsDiffer>false</organismsDiffer>
    <experiments>3</experiments>
</comment>
<comment type="interaction">
    <interactant intactId="EBI-1642333">
        <id>Q9BYV9</id>
    </interactant>
    <interactant intactId="EBI-366570">
        <id>Q9BUL9</id>
        <label>RPP25</label>
    </interactant>
    <organismsDiffer>false</organismsDiffer>
    <experiments>3</experiments>
</comment>
<comment type="interaction">
    <interactant intactId="EBI-1642333">
        <id>Q9BYV9</id>
    </interactant>
    <interactant intactId="EBI-748391">
        <id>Q9BWG6</id>
        <label>SCNM1</label>
    </interactant>
    <organismsDiffer>false</organismsDiffer>
    <experiments>3</experiments>
</comment>
<comment type="interaction">
    <interactant intactId="EBI-1642333">
        <id>Q9BYV9</id>
    </interactant>
    <interactant intactId="EBI-9661945">
        <id>O75387</id>
        <label>SLC43A1</label>
    </interactant>
    <organismsDiffer>false</organismsDiffer>
    <experiments>3</experiments>
</comment>
<comment type="interaction">
    <interactant intactId="EBI-1642333">
        <id>Q9BYV9</id>
    </interactant>
    <interactant intactId="EBI-8463848">
        <id>Q8NB12</id>
        <label>SMYD1</label>
    </interactant>
    <organismsDiffer>false</organismsDiffer>
    <experiments>3</experiments>
</comment>
<comment type="interaction">
    <interactant intactId="EBI-1642333">
        <id>Q9BYV9</id>
    </interactant>
    <interactant intactId="EBI-710310">
        <id>Q15560</id>
        <label>TCEA2</label>
    </interactant>
    <organismsDiffer>false</organismsDiffer>
    <experiments>3</experiments>
</comment>
<comment type="interaction">
    <interactant intactId="EBI-1642333">
        <id>Q9BYV9</id>
    </interactant>
    <interactant intactId="EBI-3650647">
        <id>Q9BUZ4</id>
        <label>TRAF4</label>
    </interactant>
    <organismsDiffer>false</organismsDiffer>
    <experiments>3</experiments>
</comment>
<comment type="interaction">
    <interactant intactId="EBI-1642333">
        <id>Q9BYV9</id>
    </interactant>
    <interactant intactId="EBI-5235829">
        <id>Q8IWZ5</id>
        <label>TRIM42</label>
    </interactant>
    <organismsDiffer>false</organismsDiffer>
    <experiments>3</experiments>
</comment>
<comment type="interaction">
    <interactant intactId="EBI-1642333">
        <id>Q9BYV9</id>
    </interactant>
    <interactant intactId="EBI-10687282">
        <id>Q9NRE2</id>
        <label>TSHZ2</label>
    </interactant>
    <organismsDiffer>false</organismsDiffer>
    <experiments>3</experiments>
</comment>
<comment type="interaction">
    <interactant intactId="EBI-1642333">
        <id>Q9BYV9</id>
    </interactant>
    <interactant intactId="EBI-5357290">
        <id>O75386</id>
        <label>TULP3</label>
    </interactant>
    <organismsDiffer>false</organismsDiffer>
    <experiments>5</experiments>
</comment>
<comment type="interaction">
    <interactant intactId="EBI-1642333">
        <id>Q9BYV9</id>
    </interactant>
    <interactant intactId="EBI-744471">
        <id>O43167</id>
        <label>ZBTB24</label>
    </interactant>
    <organismsDiffer>false</organismsDiffer>
    <experiments>4</experiments>
</comment>
<comment type="interaction">
    <interactant intactId="EBI-1642333">
        <id>Q9BYV9</id>
    </interactant>
    <interactant intactId="EBI-11317716">
        <id>Q8NCN2</id>
        <label>ZBTB34</label>
    </interactant>
    <organismsDiffer>false</organismsDiffer>
    <experiments>4</experiments>
</comment>
<comment type="interaction">
    <interactant intactId="EBI-1642333">
        <id>Q9BYV9</id>
    </interactant>
    <interactant intactId="EBI-2555767">
        <id>Q15973</id>
        <label>ZNF124</label>
    </interactant>
    <organismsDiffer>false</organismsDiffer>
    <experiments>3</experiments>
</comment>
<comment type="interaction">
    <interactant intactId="EBI-1642333">
        <id>Q9BYV9</id>
    </interactant>
    <interactant intactId="EBI-11962468">
        <id>Q7Z4V0</id>
        <label>ZNF438</label>
    </interactant>
    <organismsDiffer>false</organismsDiffer>
    <experiments>3</experiments>
</comment>
<comment type="interaction">
    <interactant intactId="EBI-1642333">
        <id>Q9BYV9</id>
    </interactant>
    <interactant intactId="EBI-10251462">
        <id>Q6NX45</id>
        <label>ZNF774</label>
    </interactant>
    <organismsDiffer>false</organismsDiffer>
    <experiments>3</experiments>
</comment>
<comment type="interaction">
    <interactant intactId="EBI-1642333">
        <id>Q9BYV9</id>
    </interactant>
    <interactant intactId="EBI-10240849">
        <id>Q3KQV3</id>
        <label>ZNF792</label>
    </interactant>
    <organismsDiffer>false</organismsDiffer>
    <experiments>3</experiments>
</comment>
<comment type="subcellular location">
    <subcellularLocation>
        <location evidence="6 8">Cytoplasm</location>
    </subcellularLocation>
    <subcellularLocation>
        <location evidence="4 6 8">Nucleus</location>
    </subcellularLocation>
    <text evidence="6">Nucleocytoplasmic shuttling is controlled by phosphorylation.</text>
</comment>
<comment type="tissue specificity">
    <text>B-cell specific.</text>
</comment>
<comment type="PTM">
    <text evidence="6">Phosphorylation at Ser-521 downstream of the PI-3K pathway promotes nuclear export.</text>
</comment>
<comment type="PTM">
    <text evidence="7">The reversible disulfide bond may provide a mechanism to regulate the activity in oxidative stress responses.</text>
</comment>
<comment type="disease" evidence="8">
    <disease id="DI-05539">
        <name>Immunodeficiency 60 and autoimmunity</name>
        <acronym>IMD60</acronym>
        <description>An autosomal dominant primary immunologic disorder characterized by intestinal inflammation, recurrent sino-pulmonary infections, impaired lymphocyte maturation, and variably decreased immunoglobulin production.</description>
        <dbReference type="MIM" id="618394"/>
    </disease>
    <text>The disease is caused by variants affecting the gene represented in this entry.</text>
</comment>
<comment type="similarity">
    <text evidence="9">Belongs to the bZIP family. CNC subfamily.</text>
</comment>
<comment type="sequence caution" evidence="9">
    <conflict type="erroneous initiation">
        <sequence resource="EMBL-CDS" id="BAD92126"/>
    </conflict>
</comment>
<comment type="online information" name="Atlas of Genetics and Cytogenetics in Oncology and Haematology">
    <link uri="https://atlasgeneticsoncology.org/gene/741/BACH2"/>
</comment>